<organism>
    <name type="scientific">Oryza sativa</name>
    <name type="common">Rice</name>
    <dbReference type="NCBI Taxonomy" id="4530"/>
    <lineage>
        <taxon>Eukaryota</taxon>
        <taxon>Viridiplantae</taxon>
        <taxon>Streptophyta</taxon>
        <taxon>Embryophyta</taxon>
        <taxon>Tracheophyta</taxon>
        <taxon>Spermatophyta</taxon>
        <taxon>Magnoliopsida</taxon>
        <taxon>Liliopsida</taxon>
        <taxon>Poales</taxon>
        <taxon>Poaceae</taxon>
        <taxon>BOP clade</taxon>
        <taxon>Oryzoideae</taxon>
        <taxon>Oryzeae</taxon>
        <taxon>Oryzinae</taxon>
        <taxon>Oryza</taxon>
    </lineage>
</organism>
<evidence type="ECO:0000250" key="1">
    <source>
        <dbReference type="UniProtKB" id="P56780"/>
    </source>
</evidence>
<evidence type="ECO:0000255" key="2">
    <source>
        <dbReference type="HAMAP-Rule" id="MF_00752"/>
    </source>
</evidence>
<evidence type="ECO:0000256" key="3">
    <source>
        <dbReference type="SAM" id="MobiDB-lite"/>
    </source>
</evidence>
<evidence type="ECO:0000305" key="4"/>
<comment type="function">
    <text evidence="2">One of the components of the core complex of photosystem II (PSII), required for its stability and/or assembly. PSII is a light-driven water:plastoquinone oxidoreductase that uses light energy to abstract electrons from H(2)O, generating O(2) and a proton gradient subsequently used for ATP formation. It consists of a core antenna complex that captures photons, and an electron transfer chain that converts photonic excitation into a charge separation.</text>
</comment>
<comment type="subunit">
    <text evidence="2">PSII is composed of 1 copy each of membrane proteins PsbA, PsbB, PsbC, PsbD, PsbE, PsbF, PsbH, PsbI, PsbJ, PsbK, PsbL, PsbM, PsbT, PsbX, PsbY, PsbZ, Psb30/Ycf12, at least 3 peripheral proteins of the oxygen-evolving complex and a large number of cofactors. It forms dimeric complexes.</text>
</comment>
<comment type="subcellular location">
    <subcellularLocation>
        <location evidence="2">Plastid</location>
        <location evidence="2">Chloroplast thylakoid membrane</location>
        <topology evidence="2">Single-pass membrane protein</topology>
    </subcellularLocation>
</comment>
<comment type="PTM">
    <text evidence="2">Phosphorylation is a light-dependent reaction catalyzed by a membrane-bound kinase; phosphorylation occurs on Thr residue(s) in the N-terminus of the protein.</text>
</comment>
<comment type="similarity">
    <text evidence="2">Belongs to the PsbH family.</text>
</comment>
<comment type="sequence caution" evidence="4">
    <conflict type="erroneous initiation">
        <sequence resource="EMBL-CDS" id="AAS46202"/>
    </conflict>
    <text>Extended N-terminus.</text>
</comment>
<proteinExistence type="inferred from homology"/>
<name>PSBH_ORYSA</name>
<keyword id="KW-0150">Chloroplast</keyword>
<keyword id="KW-0472">Membrane</keyword>
<keyword id="KW-0597">Phosphoprotein</keyword>
<keyword id="KW-0602">Photosynthesis</keyword>
<keyword id="KW-0604">Photosystem II</keyword>
<keyword id="KW-0934">Plastid</keyword>
<keyword id="KW-0793">Thylakoid</keyword>
<keyword id="KW-0812">Transmembrane</keyword>
<keyword id="KW-1133">Transmembrane helix</keyword>
<gene>
    <name evidence="2" type="primary">psbH</name>
    <name type="ORF">PA093</name>
</gene>
<protein>
    <recommendedName>
        <fullName evidence="2">Photosystem II reaction center protein H</fullName>
        <shortName evidence="2">PSII-H</shortName>
    </recommendedName>
    <alternativeName>
        <fullName evidence="2">Photosystem II 10 kDa phosphoprotein</fullName>
    </alternativeName>
</protein>
<reference key="1">
    <citation type="journal article" date="2004" name="Plant Physiol.">
        <title>A comparison of rice chloroplast genomes.</title>
        <authorList>
            <person name="Tang J."/>
            <person name="Xia H."/>
            <person name="Cao M."/>
            <person name="Zhang X."/>
            <person name="Zeng W."/>
            <person name="Hu S."/>
            <person name="Tong W."/>
            <person name="Wang J."/>
            <person name="Wang J."/>
            <person name="Yu J."/>
            <person name="Yang H."/>
            <person name="Zhu L."/>
        </authorList>
    </citation>
    <scope>NUCLEOTIDE SEQUENCE [LARGE SCALE GENOMIC DNA]</scope>
    <source>
        <strain>cv. PA64s</strain>
    </source>
</reference>
<sequence length="73" mass="7886">MATQTVEDSSRPGPRQTRVGNLLKPLNSEYGKVAPGWGTTPFMGVAMALFAVFLSIILEIYNSSVLLDGILMN</sequence>
<geneLocation type="chloroplast"/>
<dbReference type="EMBL" id="AY522331">
    <property type="protein sequence ID" value="AAS46202.1"/>
    <property type="status" value="ALT_INIT"/>
    <property type="molecule type" value="Genomic_DNA"/>
</dbReference>
<dbReference type="RefSeq" id="YP_009305332.1">
    <property type="nucleotide sequence ID" value="NC_031333.1"/>
</dbReference>
<dbReference type="SMR" id="P0C420"/>
<dbReference type="GeneID" id="29141400"/>
<dbReference type="GO" id="GO:0009535">
    <property type="term" value="C:chloroplast thylakoid membrane"/>
    <property type="evidence" value="ECO:0007669"/>
    <property type="project" value="UniProtKB-SubCell"/>
</dbReference>
<dbReference type="GO" id="GO:0009523">
    <property type="term" value="C:photosystem II"/>
    <property type="evidence" value="ECO:0007669"/>
    <property type="project" value="UniProtKB-KW"/>
</dbReference>
<dbReference type="GO" id="GO:0009536">
    <property type="term" value="C:plastid"/>
    <property type="evidence" value="ECO:0000305"/>
    <property type="project" value="Gramene"/>
</dbReference>
<dbReference type="GO" id="GO:0042301">
    <property type="term" value="F:phosphate ion binding"/>
    <property type="evidence" value="ECO:0007669"/>
    <property type="project" value="InterPro"/>
</dbReference>
<dbReference type="GO" id="GO:0015979">
    <property type="term" value="P:photosynthesis"/>
    <property type="evidence" value="ECO:0007669"/>
    <property type="project" value="UniProtKB-UniRule"/>
</dbReference>
<dbReference type="GO" id="GO:0050821">
    <property type="term" value="P:protein stabilization"/>
    <property type="evidence" value="ECO:0007669"/>
    <property type="project" value="InterPro"/>
</dbReference>
<dbReference type="FunFam" id="1.20.5.880:FF:000001">
    <property type="entry name" value="Photosystem II reaction center protein H"/>
    <property type="match status" value="1"/>
</dbReference>
<dbReference type="Gene3D" id="1.20.5.880">
    <property type="entry name" value="Photosystem II reaction center protein H"/>
    <property type="match status" value="1"/>
</dbReference>
<dbReference type="HAMAP" id="MF_00752">
    <property type="entry name" value="PSII_PsbH"/>
    <property type="match status" value="1"/>
</dbReference>
<dbReference type="InterPro" id="IPR001056">
    <property type="entry name" value="PSII_PsbH"/>
</dbReference>
<dbReference type="InterPro" id="IPR036863">
    <property type="entry name" value="PSII_PsbH_sf"/>
</dbReference>
<dbReference type="NCBIfam" id="NF002728">
    <property type="entry name" value="PRK02624.1"/>
    <property type="match status" value="1"/>
</dbReference>
<dbReference type="PANTHER" id="PTHR34469">
    <property type="entry name" value="PHOTOSYSTEM II REACTION CENTER PROTEIN H"/>
    <property type="match status" value="1"/>
</dbReference>
<dbReference type="PANTHER" id="PTHR34469:SF4">
    <property type="entry name" value="PHOTOSYSTEM II REACTION CENTER PROTEIN H"/>
    <property type="match status" value="1"/>
</dbReference>
<dbReference type="Pfam" id="PF00737">
    <property type="entry name" value="PsbH"/>
    <property type="match status" value="1"/>
</dbReference>
<dbReference type="SUPFAM" id="SSF161025">
    <property type="entry name" value="Photosystem II 10 kDa phosphoprotein PsbH"/>
    <property type="match status" value="1"/>
</dbReference>
<accession>P0C420</accession>
<accession>P09449</accession>
<accession>Q6QXZ2</accession>
<accession>Q6QY56</accession>
<feature type="initiator methionine" description="Removed" evidence="1">
    <location>
        <position position="1"/>
    </location>
</feature>
<feature type="chain" id="PRO_0000070524" description="Photosystem II reaction center protein H">
    <location>
        <begin position="2"/>
        <end position="73"/>
    </location>
</feature>
<feature type="transmembrane region" description="Helical" evidence="2">
    <location>
        <begin position="41"/>
        <end position="61"/>
    </location>
</feature>
<feature type="region of interest" description="Disordered" evidence="3">
    <location>
        <begin position="1"/>
        <end position="21"/>
    </location>
</feature>
<feature type="modified residue" description="Phosphothreonine" evidence="2">
    <location>
        <position position="3"/>
    </location>
</feature>
<feature type="modified residue" description="Phosphothreonine" evidence="2">
    <location>
        <position position="5"/>
    </location>
</feature>